<reference key="1">
    <citation type="journal article" date="2009" name="PLoS Genet.">
        <title>The genome of Nectria haematococca: contribution of supernumerary chromosomes to gene expansion.</title>
        <authorList>
            <person name="Coleman J.J."/>
            <person name="Rounsley S.D."/>
            <person name="Rodriguez-Carres M."/>
            <person name="Kuo A."/>
            <person name="Wasmann C.C."/>
            <person name="Grimwood J."/>
            <person name="Schmutz J."/>
            <person name="Taga M."/>
            <person name="White G.J."/>
            <person name="Zhou S."/>
            <person name="Schwartz D.C."/>
            <person name="Freitag M."/>
            <person name="Ma L.-J."/>
            <person name="Danchin E.G.J."/>
            <person name="Henrissat B."/>
            <person name="Coutinho P.M."/>
            <person name="Nelson D.R."/>
            <person name="Straney D."/>
            <person name="Napoli C.A."/>
            <person name="Barker B.M."/>
            <person name="Gribskov M."/>
            <person name="Rep M."/>
            <person name="Kroken S."/>
            <person name="Molnar I."/>
            <person name="Rensing C."/>
            <person name="Kennell J.C."/>
            <person name="Zamora J."/>
            <person name="Farman M.L."/>
            <person name="Selker E.U."/>
            <person name="Salamov A."/>
            <person name="Shapiro H."/>
            <person name="Pangilinan J."/>
            <person name="Lindquist E."/>
            <person name="Lamers C."/>
            <person name="Grigoriev I.V."/>
            <person name="Geiser D.M."/>
            <person name="Covert S.F."/>
            <person name="Temporini E."/>
            <person name="VanEtten H.D."/>
        </authorList>
    </citation>
    <scope>NUCLEOTIDE SEQUENCE [LARGE SCALE GENOMIC DNA]</scope>
    <source>
        <strain>ATCC MYA-4622 / CBS 123669 / FGSC 9596 / NRRL 45880 / 77-13-4</strain>
    </source>
</reference>
<reference key="2">
    <citation type="journal article" date="2013" name="Biocatal. Biotransformation">
        <title>Heterologous expression, purification and characterization of arylacetonitrilases from Nectria haematococca and Arthroderma benhamiae.</title>
        <authorList>
            <person name="Vesela A.B."/>
            <person name="Petrickova A."/>
            <person name="Weyrauch P."/>
            <person name="Martinkova L."/>
        </authorList>
    </citation>
    <scope>FUNCTION</scope>
    <scope>CATALYTIC ACTIVITY</scope>
    <scope>BIOPHYSICOCHEMICAL PROPERTIES</scope>
</reference>
<reference key="3">
    <citation type="journal article" date="2013" name="Mol. Biotechnol.">
        <title>A comparative study of nitrilases identified by genome mining.</title>
        <authorList>
            <person name="Kaplan O."/>
            <person name="Vesela A.B."/>
            <person name="Petrickova A."/>
            <person name="Pasquarelli F."/>
            <person name="Picmanova M."/>
            <person name="Rinagelova A."/>
            <person name="Bhalla T.C."/>
            <person name="Patek M."/>
            <person name="Martinkova L."/>
        </authorList>
    </citation>
    <scope>FUNCTION</scope>
    <scope>CATALYTIC ACTIVITY</scope>
</reference>
<protein>
    <recommendedName>
        <fullName evidence="4 5">Arylacetonitrilase</fullName>
        <ecNumber evidence="2 3">3.5.5.1</ecNumber>
        <ecNumber evidence="2 3">3.5.5.5</ecNumber>
    </recommendedName>
    <alternativeName>
        <fullName evidence="4">NitNh</fullName>
    </alternativeName>
</protein>
<feature type="chain" id="PRO_0000432172" description="Arylacetonitrilase">
    <location>
        <begin position="1"/>
        <end position="339"/>
    </location>
</feature>
<feature type="domain" description="CN hydrolase" evidence="1">
    <location>
        <begin position="5"/>
        <end position="290"/>
    </location>
</feature>
<feature type="active site" description="Proton acceptor" evidence="1">
    <location>
        <position position="45"/>
    </location>
</feature>
<feature type="active site" evidence="1">
    <location>
        <position position="126"/>
    </location>
</feature>
<feature type="active site" description="Nucleophile" evidence="1">
    <location>
        <position position="167"/>
    </location>
</feature>
<gene>
    <name type="ORF">NECHADRAFT_80653</name>
</gene>
<sequence length="339" mass="36773">MACPIRVAVTQAEPVYLDLAASVKKACGLIAEAAQNGAKLVAFSECWLPGYPAWIWARPVDFELQTRYIYNSLPIESEAMELVKATAKEHSIAVALGFSEQSPSHSIYISQAIISPQGEVVMHRRKIKPTHMERTLFGDGSGADLNNVVEVDFGAEHGKIKVGCFACWEHTQPLLKYHSISQGEAIHISMWPPIDPSAGVDHPGLWSMTADGCQNLSQTYAIESTAYVLHSTSVCTQKGIETLKTQDGLSCRQPGGGHSCVIGPDGRRLTAPLGDGSPDAEGIVYADLDLTKVVATRGFLDIVGHYSRPDLLWLGVDREQKENIIAKQHKAAEQEAVQG</sequence>
<evidence type="ECO:0000255" key="1">
    <source>
        <dbReference type="PROSITE-ProRule" id="PRU00054"/>
    </source>
</evidence>
<evidence type="ECO:0000269" key="2">
    <source>
    </source>
</evidence>
<evidence type="ECO:0000269" key="3">
    <source ref="2"/>
</evidence>
<evidence type="ECO:0000303" key="4">
    <source>
    </source>
</evidence>
<evidence type="ECO:0000303" key="5">
    <source ref="2"/>
</evidence>
<evidence type="ECO:0000305" key="6"/>
<name>NIT_FUSV7</name>
<comment type="function">
    <text evidence="2 3">Nitrilase that hydrolyzes preferentially phenylacetonitrile, (R,S)-mandelonitrile, and 3-indolylacetonitrile.</text>
</comment>
<comment type="catalytic activity">
    <reaction evidence="2 3">
        <text>a nitrile + 2 H2O = a carboxylate + NH4(+)</text>
        <dbReference type="Rhea" id="RHEA:21724"/>
        <dbReference type="ChEBI" id="CHEBI:15377"/>
        <dbReference type="ChEBI" id="CHEBI:18379"/>
        <dbReference type="ChEBI" id="CHEBI:28938"/>
        <dbReference type="ChEBI" id="CHEBI:29067"/>
        <dbReference type="EC" id="3.5.5.1"/>
    </reaction>
</comment>
<comment type="catalytic activity">
    <reaction evidence="2 3">
        <text>4-chlorophenylacetonitrile + 2 H2O = 4-chlorophenylacetate + NH4(+)</text>
        <dbReference type="Rhea" id="RHEA:20657"/>
        <dbReference type="ChEBI" id="CHEBI:15377"/>
        <dbReference type="ChEBI" id="CHEBI:16237"/>
        <dbReference type="ChEBI" id="CHEBI:17346"/>
        <dbReference type="ChEBI" id="CHEBI:28938"/>
        <dbReference type="EC" id="3.5.5.5"/>
    </reaction>
</comment>
<comment type="biophysicochemical properties">
    <kinetics>
        <KM evidence="3">8.3 mM for phenylacetonitrile</KM>
        <KM evidence="3">9.9 mM for (R,S)-mandelonitrile</KM>
        <Vmax evidence="3">111.1 umol/min/mg enzyme toward phenylacetonitrile</Vmax>
        <Vmax evidence="3">31.3 umol/min/mg enzyme toward (R,S)-mandelonitrile</Vmax>
    </kinetics>
    <phDependence>
        <text evidence="3">Optimum pH is 5.5-8.5.</text>
    </phDependence>
    <temperatureDependence>
        <text evidence="3">Optimum temperature is 40 degrees Celsius.</text>
    </temperatureDependence>
</comment>
<comment type="similarity">
    <text evidence="6">Belongs to the carbon-nitrogen hydrolase superfamily. Nitrilase family.</text>
</comment>
<proteinExistence type="evidence at protein level"/>
<keyword id="KW-0378">Hydrolase</keyword>
<keyword id="KW-1185">Reference proteome</keyword>
<accession>C7YS90</accession>
<organism>
    <name type="scientific">Fusarium vanettenii (strain ATCC MYA-4622 / CBS 123669 / FGSC 9596 / NRRL 45880 / 77-13-4)</name>
    <name type="common">Fusarium solani subsp. pisi</name>
    <dbReference type="NCBI Taxonomy" id="660122"/>
    <lineage>
        <taxon>Eukaryota</taxon>
        <taxon>Fungi</taxon>
        <taxon>Dikarya</taxon>
        <taxon>Ascomycota</taxon>
        <taxon>Pezizomycotina</taxon>
        <taxon>Sordariomycetes</taxon>
        <taxon>Hypocreomycetidae</taxon>
        <taxon>Hypocreales</taxon>
        <taxon>Nectriaceae</taxon>
        <taxon>Fusarium</taxon>
        <taxon>Fusarium solani species complex</taxon>
        <taxon>Fusarium vanettenii</taxon>
    </lineage>
</organism>
<dbReference type="EC" id="3.5.5.1" evidence="2 3"/>
<dbReference type="EC" id="3.5.5.5" evidence="2 3"/>
<dbReference type="EMBL" id="GG698899">
    <property type="protein sequence ID" value="EEU45207.1"/>
    <property type="molecule type" value="Genomic_DNA"/>
</dbReference>
<dbReference type="RefSeq" id="XP_003050920.1">
    <property type="nucleotide sequence ID" value="XM_003050874.1"/>
</dbReference>
<dbReference type="SMR" id="C7YS90"/>
<dbReference type="STRING" id="660122.C7YS90"/>
<dbReference type="EnsemblFungi" id="NechaT80653">
    <property type="protein sequence ID" value="NechaP80653"/>
    <property type="gene ID" value="NechaG80653"/>
</dbReference>
<dbReference type="GeneID" id="9666163"/>
<dbReference type="KEGG" id="nhe:NECHADRAFT_80653"/>
<dbReference type="VEuPathDB" id="FungiDB:NECHADRAFT_80653"/>
<dbReference type="eggNOG" id="KOG0805">
    <property type="taxonomic scope" value="Eukaryota"/>
</dbReference>
<dbReference type="HOGENOM" id="CLU_030130_6_0_1"/>
<dbReference type="InParanoid" id="C7YS90"/>
<dbReference type="OMA" id="GYPCWIW"/>
<dbReference type="OrthoDB" id="10250282at2759"/>
<dbReference type="Proteomes" id="UP000005206">
    <property type="component" value="Unassembled WGS sequence"/>
</dbReference>
<dbReference type="GO" id="GO:0047428">
    <property type="term" value="F:arylacetonitrilase activity"/>
    <property type="evidence" value="ECO:0007669"/>
    <property type="project" value="UniProtKB-EC"/>
</dbReference>
<dbReference type="GO" id="GO:0016836">
    <property type="term" value="F:hydro-lyase activity"/>
    <property type="evidence" value="ECO:0007669"/>
    <property type="project" value="UniProtKB-ARBA"/>
</dbReference>
<dbReference type="CDD" id="cd07564">
    <property type="entry name" value="nitrilases_CHs"/>
    <property type="match status" value="1"/>
</dbReference>
<dbReference type="FunFam" id="3.60.110.10:FF:000011">
    <property type="entry name" value="Cyanide hydratase"/>
    <property type="match status" value="1"/>
</dbReference>
<dbReference type="Gene3D" id="3.60.110.10">
    <property type="entry name" value="Carbon-nitrogen hydrolase"/>
    <property type="match status" value="1"/>
</dbReference>
<dbReference type="InterPro" id="IPR003010">
    <property type="entry name" value="C-N_Hydrolase"/>
</dbReference>
<dbReference type="InterPro" id="IPR036526">
    <property type="entry name" value="C-N_Hydrolase_sf"/>
</dbReference>
<dbReference type="InterPro" id="IPR000132">
    <property type="entry name" value="Nitrilase/CN_hydratase_CS"/>
</dbReference>
<dbReference type="InterPro" id="IPR044149">
    <property type="entry name" value="Nitrilases_CHs"/>
</dbReference>
<dbReference type="PANTHER" id="PTHR46044:SF14">
    <property type="entry name" value="ARYLACETONITRILASE"/>
    <property type="match status" value="1"/>
</dbReference>
<dbReference type="PANTHER" id="PTHR46044">
    <property type="entry name" value="NITRILASE"/>
    <property type="match status" value="1"/>
</dbReference>
<dbReference type="Pfam" id="PF00795">
    <property type="entry name" value="CN_hydrolase"/>
    <property type="match status" value="1"/>
</dbReference>
<dbReference type="SUPFAM" id="SSF56317">
    <property type="entry name" value="Carbon-nitrogen hydrolase"/>
    <property type="match status" value="1"/>
</dbReference>
<dbReference type="PROSITE" id="PS50263">
    <property type="entry name" value="CN_HYDROLASE"/>
    <property type="match status" value="1"/>
</dbReference>
<dbReference type="PROSITE" id="PS00920">
    <property type="entry name" value="NITRIL_CHT_1"/>
    <property type="match status" value="1"/>
</dbReference>